<dbReference type="EMBL" id="AK002564">
    <property type="protein sequence ID" value="BAB22190.1"/>
    <property type="molecule type" value="mRNA"/>
</dbReference>
<dbReference type="EMBL" id="AK007738">
    <property type="protein sequence ID" value="BAB25225.1"/>
    <property type="molecule type" value="mRNA"/>
</dbReference>
<dbReference type="EMBL" id="AK164539">
    <property type="protein sequence ID" value="BAE37829.1"/>
    <property type="molecule type" value="mRNA"/>
</dbReference>
<dbReference type="EMBL" id="AK170932">
    <property type="protein sequence ID" value="BAE42124.1"/>
    <property type="molecule type" value="mRNA"/>
</dbReference>
<dbReference type="EMBL" id="BC003345">
    <property type="protein sequence ID" value="AAH03345.1"/>
    <property type="molecule type" value="mRNA"/>
</dbReference>
<dbReference type="EMBL" id="BC049099">
    <property type="protein sequence ID" value="AAH49099.1"/>
    <property type="molecule type" value="mRNA"/>
</dbReference>
<dbReference type="CCDS" id="CCDS26644.1">
    <molecule id="Q3TC33-1"/>
</dbReference>
<dbReference type="CCDS" id="CCDS49314.1">
    <molecule id="Q3TC33-2"/>
</dbReference>
<dbReference type="RefSeq" id="NP_001162129.1">
    <molecule id="Q3TC33-2"/>
    <property type="nucleotide sequence ID" value="NM_001168658.1"/>
</dbReference>
<dbReference type="RefSeq" id="NP_001162130.1">
    <molecule id="Q3TC33-1"/>
    <property type="nucleotide sequence ID" value="NM_001168659.1"/>
</dbReference>
<dbReference type="RefSeq" id="NP_077163.1">
    <molecule id="Q3TC33-1"/>
    <property type="nucleotide sequence ID" value="NM_024201.3"/>
</dbReference>
<dbReference type="SMR" id="Q3TC33"/>
<dbReference type="BioGRID" id="212183">
    <property type="interactions" value="1"/>
</dbReference>
<dbReference type="FunCoup" id="Q3TC33">
    <property type="interactions" value="137"/>
</dbReference>
<dbReference type="IntAct" id="Q3TC33">
    <property type="interactions" value="2"/>
</dbReference>
<dbReference type="STRING" id="10090.ENSMUSP00000022063"/>
<dbReference type="GlyGen" id="Q3TC33">
    <property type="glycosylation" value="1 site, 1 N-linked glycan (1 site)"/>
</dbReference>
<dbReference type="PhosphoSitePlus" id="Q3TC33"/>
<dbReference type="SwissPalm" id="Q3TC33"/>
<dbReference type="PaxDb" id="10090-ENSMUSP00000022063"/>
<dbReference type="PeptideAtlas" id="Q3TC33"/>
<dbReference type="ProteomicsDB" id="281487">
    <molecule id="Q3TC33-1"/>
</dbReference>
<dbReference type="ProteomicsDB" id="281488">
    <molecule id="Q3TC33-2"/>
</dbReference>
<dbReference type="Pumba" id="Q3TC33"/>
<dbReference type="Antibodypedia" id="22206">
    <property type="antibodies" value="86 antibodies from 17 providers"/>
</dbReference>
<dbReference type="DNASU" id="67433"/>
<dbReference type="Ensembl" id="ENSMUST00000022063.14">
    <molecule id="Q3TC33-1"/>
    <property type="protein sequence ID" value="ENSMUSP00000022063.8"/>
    <property type="gene ID" value="ENSMUSG00000021578.18"/>
</dbReference>
<dbReference type="Ensembl" id="ENSMUST00000160021.8">
    <molecule id="Q3TC33-2"/>
    <property type="protein sequence ID" value="ENSMUSP00000124193.2"/>
    <property type="gene ID" value="ENSMUSG00000021578.18"/>
</dbReference>
<dbReference type="GeneID" id="67433"/>
<dbReference type="KEGG" id="mmu:67433"/>
<dbReference type="UCSC" id="uc007rfb.2">
    <molecule id="Q3TC33-1"/>
    <property type="organism name" value="mouse"/>
</dbReference>
<dbReference type="UCSC" id="uc007rfd.2">
    <molecule id="Q3TC33-2"/>
    <property type="organism name" value="mouse"/>
</dbReference>
<dbReference type="AGR" id="MGI:1914683"/>
<dbReference type="CTD" id="133957"/>
<dbReference type="MGI" id="MGI:1914683">
    <property type="gene designation" value="Ccdc127"/>
</dbReference>
<dbReference type="VEuPathDB" id="HostDB:ENSMUSG00000021578"/>
<dbReference type="eggNOG" id="ENOG502QVKQ">
    <property type="taxonomic scope" value="Eukaryota"/>
</dbReference>
<dbReference type="GeneTree" id="ENSGT00390000008818"/>
<dbReference type="InParanoid" id="Q3TC33"/>
<dbReference type="OMA" id="YWELIVE"/>
<dbReference type="OrthoDB" id="10064762at2759"/>
<dbReference type="PhylomeDB" id="Q3TC33"/>
<dbReference type="TreeFam" id="TF331099"/>
<dbReference type="BioGRID-ORCS" id="67433">
    <property type="hits" value="4 hits in 77 CRISPR screens"/>
</dbReference>
<dbReference type="CD-CODE" id="CE726F99">
    <property type="entry name" value="Postsynaptic density"/>
</dbReference>
<dbReference type="ChiTaRS" id="Ccdc127">
    <property type="organism name" value="mouse"/>
</dbReference>
<dbReference type="PRO" id="PR:Q3TC33"/>
<dbReference type="Proteomes" id="UP000000589">
    <property type="component" value="Chromosome 13"/>
</dbReference>
<dbReference type="RNAct" id="Q3TC33">
    <property type="molecule type" value="protein"/>
</dbReference>
<dbReference type="Bgee" id="ENSMUSG00000021578">
    <property type="expression patterns" value="Expressed in interventricular septum and 246 other cell types or tissues"/>
</dbReference>
<dbReference type="ExpressionAtlas" id="Q3TC33">
    <property type="expression patterns" value="baseline and differential"/>
</dbReference>
<dbReference type="InterPro" id="IPR034607">
    <property type="entry name" value="CCDC127"/>
</dbReference>
<dbReference type="PANTHER" id="PTHR31958">
    <property type="entry name" value="COILED-COIL DOMAIN-CONTAINING PROTEIN 127"/>
    <property type="match status" value="1"/>
</dbReference>
<dbReference type="PANTHER" id="PTHR31958:SF2">
    <property type="entry name" value="COILED-COIL DOMAIN-CONTAINING PROTEIN 127"/>
    <property type="match status" value="1"/>
</dbReference>
<accession>Q3TC33</accession>
<accession>Q3TPA8</accession>
<accession>Q9CQ15</accession>
<evidence type="ECO:0000255" key="1"/>
<evidence type="ECO:0000303" key="2">
    <source>
    </source>
</evidence>
<evidence type="ECO:0000305" key="3"/>
<keyword id="KW-0025">Alternative splicing</keyword>
<keyword id="KW-0175">Coiled coil</keyword>
<keyword id="KW-1185">Reference proteome</keyword>
<gene>
    <name type="primary">Ccdc127</name>
</gene>
<feature type="chain" id="PRO_0000263751" description="Coiled-coil domain-containing protein 127">
    <location>
        <begin position="1"/>
        <end position="260"/>
    </location>
</feature>
<feature type="coiled-coil region" evidence="1">
    <location>
        <begin position="76"/>
        <end position="139"/>
    </location>
</feature>
<feature type="splice variant" id="VSP_021885" description="In isoform 2." evidence="2">
    <original>VG</original>
    <variation>ST</variation>
    <location>
        <begin position="162"/>
        <end position="163"/>
    </location>
</feature>
<feature type="splice variant" id="VSP_021886" description="In isoform 2." evidence="2">
    <location>
        <begin position="164"/>
        <end position="260"/>
    </location>
</feature>
<feature type="sequence conflict" description="In Ref. 1; BAE42124." evidence="3" ref="1">
    <original>R</original>
    <variation>H</variation>
    <location>
        <position position="111"/>
    </location>
</feature>
<organism>
    <name type="scientific">Mus musculus</name>
    <name type="common">Mouse</name>
    <dbReference type="NCBI Taxonomy" id="10090"/>
    <lineage>
        <taxon>Eukaryota</taxon>
        <taxon>Metazoa</taxon>
        <taxon>Chordata</taxon>
        <taxon>Craniata</taxon>
        <taxon>Vertebrata</taxon>
        <taxon>Euteleostomi</taxon>
        <taxon>Mammalia</taxon>
        <taxon>Eutheria</taxon>
        <taxon>Euarchontoglires</taxon>
        <taxon>Glires</taxon>
        <taxon>Rodentia</taxon>
        <taxon>Myomorpha</taxon>
        <taxon>Muroidea</taxon>
        <taxon>Muridae</taxon>
        <taxon>Murinae</taxon>
        <taxon>Mus</taxon>
        <taxon>Mus</taxon>
    </lineage>
</organism>
<protein>
    <recommendedName>
        <fullName>Coiled-coil domain-containing protein 127</fullName>
    </recommendedName>
</protein>
<sequence length="260" mass="30509">MNNLNDPPNWNIRPNARADGGDGSKWNYALLVPMLGLAAFRWIWSRESQKEIEKARKAYHQRTAAFQQDLEAKYHAVISEHRRAVAQLSLELEKEQNRTSSFREALISQGRKLAEEKKLLEQERAQIKQEKSRLQPLRNVYLSCLQEEDDWQRRAQHVLKEVGEALEERQNIYCSLIIPRSARLELEKSLLVRTSVDPVAADLEMAAGLSDIFKHDKHCGDVWNTNKRQNGKLMWMYLKYWELLVELKKFKKVEKVILEK</sequence>
<name>CC127_MOUSE</name>
<proteinExistence type="evidence at protein level"/>
<comment type="alternative products">
    <event type="alternative splicing"/>
    <isoform>
        <id>Q3TC33-1</id>
        <name>1</name>
        <sequence type="displayed"/>
    </isoform>
    <isoform>
        <id>Q3TC33-2</id>
        <name>2</name>
        <sequence type="described" ref="VSP_021885 VSP_021886"/>
    </isoform>
</comment>
<reference key="1">
    <citation type="journal article" date="2005" name="Science">
        <title>The transcriptional landscape of the mammalian genome.</title>
        <authorList>
            <person name="Carninci P."/>
            <person name="Kasukawa T."/>
            <person name="Katayama S."/>
            <person name="Gough J."/>
            <person name="Frith M.C."/>
            <person name="Maeda N."/>
            <person name="Oyama R."/>
            <person name="Ravasi T."/>
            <person name="Lenhard B."/>
            <person name="Wells C."/>
            <person name="Kodzius R."/>
            <person name="Shimokawa K."/>
            <person name="Bajic V.B."/>
            <person name="Brenner S.E."/>
            <person name="Batalov S."/>
            <person name="Forrest A.R."/>
            <person name="Zavolan M."/>
            <person name="Davis M.J."/>
            <person name="Wilming L.G."/>
            <person name="Aidinis V."/>
            <person name="Allen J.E."/>
            <person name="Ambesi-Impiombato A."/>
            <person name="Apweiler R."/>
            <person name="Aturaliya R.N."/>
            <person name="Bailey T.L."/>
            <person name="Bansal M."/>
            <person name="Baxter L."/>
            <person name="Beisel K.W."/>
            <person name="Bersano T."/>
            <person name="Bono H."/>
            <person name="Chalk A.M."/>
            <person name="Chiu K.P."/>
            <person name="Choudhary V."/>
            <person name="Christoffels A."/>
            <person name="Clutterbuck D.R."/>
            <person name="Crowe M.L."/>
            <person name="Dalla E."/>
            <person name="Dalrymple B.P."/>
            <person name="de Bono B."/>
            <person name="Della Gatta G."/>
            <person name="di Bernardo D."/>
            <person name="Down T."/>
            <person name="Engstrom P."/>
            <person name="Fagiolini M."/>
            <person name="Faulkner G."/>
            <person name="Fletcher C.F."/>
            <person name="Fukushima T."/>
            <person name="Furuno M."/>
            <person name="Futaki S."/>
            <person name="Gariboldi M."/>
            <person name="Georgii-Hemming P."/>
            <person name="Gingeras T.R."/>
            <person name="Gojobori T."/>
            <person name="Green R.E."/>
            <person name="Gustincich S."/>
            <person name="Harbers M."/>
            <person name="Hayashi Y."/>
            <person name="Hensch T.K."/>
            <person name="Hirokawa N."/>
            <person name="Hill D."/>
            <person name="Huminiecki L."/>
            <person name="Iacono M."/>
            <person name="Ikeo K."/>
            <person name="Iwama A."/>
            <person name="Ishikawa T."/>
            <person name="Jakt M."/>
            <person name="Kanapin A."/>
            <person name="Katoh M."/>
            <person name="Kawasawa Y."/>
            <person name="Kelso J."/>
            <person name="Kitamura H."/>
            <person name="Kitano H."/>
            <person name="Kollias G."/>
            <person name="Krishnan S.P."/>
            <person name="Kruger A."/>
            <person name="Kummerfeld S.K."/>
            <person name="Kurochkin I.V."/>
            <person name="Lareau L.F."/>
            <person name="Lazarevic D."/>
            <person name="Lipovich L."/>
            <person name="Liu J."/>
            <person name="Liuni S."/>
            <person name="McWilliam S."/>
            <person name="Madan Babu M."/>
            <person name="Madera M."/>
            <person name="Marchionni L."/>
            <person name="Matsuda H."/>
            <person name="Matsuzawa S."/>
            <person name="Miki H."/>
            <person name="Mignone F."/>
            <person name="Miyake S."/>
            <person name="Morris K."/>
            <person name="Mottagui-Tabar S."/>
            <person name="Mulder N."/>
            <person name="Nakano N."/>
            <person name="Nakauchi H."/>
            <person name="Ng P."/>
            <person name="Nilsson R."/>
            <person name="Nishiguchi S."/>
            <person name="Nishikawa S."/>
            <person name="Nori F."/>
            <person name="Ohara O."/>
            <person name="Okazaki Y."/>
            <person name="Orlando V."/>
            <person name="Pang K.C."/>
            <person name="Pavan W.J."/>
            <person name="Pavesi G."/>
            <person name="Pesole G."/>
            <person name="Petrovsky N."/>
            <person name="Piazza S."/>
            <person name="Reed J."/>
            <person name="Reid J.F."/>
            <person name="Ring B.Z."/>
            <person name="Ringwald M."/>
            <person name="Rost B."/>
            <person name="Ruan Y."/>
            <person name="Salzberg S.L."/>
            <person name="Sandelin A."/>
            <person name="Schneider C."/>
            <person name="Schoenbach C."/>
            <person name="Sekiguchi K."/>
            <person name="Semple C.A."/>
            <person name="Seno S."/>
            <person name="Sessa L."/>
            <person name="Sheng Y."/>
            <person name="Shibata Y."/>
            <person name="Shimada H."/>
            <person name="Shimada K."/>
            <person name="Silva D."/>
            <person name="Sinclair B."/>
            <person name="Sperling S."/>
            <person name="Stupka E."/>
            <person name="Sugiura K."/>
            <person name="Sultana R."/>
            <person name="Takenaka Y."/>
            <person name="Taki K."/>
            <person name="Tammoja K."/>
            <person name="Tan S.L."/>
            <person name="Tang S."/>
            <person name="Taylor M.S."/>
            <person name="Tegner J."/>
            <person name="Teichmann S.A."/>
            <person name="Ueda H.R."/>
            <person name="van Nimwegen E."/>
            <person name="Verardo R."/>
            <person name="Wei C.L."/>
            <person name="Yagi K."/>
            <person name="Yamanishi H."/>
            <person name="Zabarovsky E."/>
            <person name="Zhu S."/>
            <person name="Zimmer A."/>
            <person name="Hide W."/>
            <person name="Bult C."/>
            <person name="Grimmond S.M."/>
            <person name="Teasdale R.D."/>
            <person name="Liu E.T."/>
            <person name="Brusic V."/>
            <person name="Quackenbush J."/>
            <person name="Wahlestedt C."/>
            <person name="Mattick J.S."/>
            <person name="Hume D.A."/>
            <person name="Kai C."/>
            <person name="Sasaki D."/>
            <person name="Tomaru Y."/>
            <person name="Fukuda S."/>
            <person name="Kanamori-Katayama M."/>
            <person name="Suzuki M."/>
            <person name="Aoki J."/>
            <person name="Arakawa T."/>
            <person name="Iida J."/>
            <person name="Imamura K."/>
            <person name="Itoh M."/>
            <person name="Kato T."/>
            <person name="Kawaji H."/>
            <person name="Kawagashira N."/>
            <person name="Kawashima T."/>
            <person name="Kojima M."/>
            <person name="Kondo S."/>
            <person name="Konno H."/>
            <person name="Nakano K."/>
            <person name="Ninomiya N."/>
            <person name="Nishio T."/>
            <person name="Okada M."/>
            <person name="Plessy C."/>
            <person name="Shibata K."/>
            <person name="Shiraki T."/>
            <person name="Suzuki S."/>
            <person name="Tagami M."/>
            <person name="Waki K."/>
            <person name="Watahiki A."/>
            <person name="Okamura-Oho Y."/>
            <person name="Suzuki H."/>
            <person name="Kawai J."/>
            <person name="Hayashizaki Y."/>
        </authorList>
    </citation>
    <scope>NUCLEOTIDE SEQUENCE [LARGE SCALE MRNA] (ISOFORMS 1 AND 2)</scope>
    <source>
        <strain>C57BL/6J</strain>
        <strain>NOD</strain>
        <tissue>Heart</tissue>
        <tissue>Kidney</tissue>
        <tissue>Pancreas</tissue>
    </source>
</reference>
<reference key="2">
    <citation type="journal article" date="2004" name="Genome Res.">
        <title>The status, quality, and expansion of the NIH full-length cDNA project: the Mammalian Gene Collection (MGC).</title>
        <authorList>
            <consortium name="The MGC Project Team"/>
        </authorList>
    </citation>
    <scope>NUCLEOTIDE SEQUENCE [LARGE SCALE MRNA] (ISOFORM 1)</scope>
    <source>
        <strain>C57BL/6J</strain>
        <strain>NMRI</strain>
        <tissue>Brain</tissue>
        <tissue>Mammary tumor</tissue>
    </source>
</reference>
<reference key="3">
    <citation type="journal article" date="2010" name="Cell">
        <title>A tissue-specific atlas of mouse protein phosphorylation and expression.</title>
        <authorList>
            <person name="Huttlin E.L."/>
            <person name="Jedrychowski M.P."/>
            <person name="Elias J.E."/>
            <person name="Goswami T."/>
            <person name="Rad R."/>
            <person name="Beausoleil S.A."/>
            <person name="Villen J."/>
            <person name="Haas W."/>
            <person name="Sowa M.E."/>
            <person name="Gygi S.P."/>
        </authorList>
    </citation>
    <scope>IDENTIFICATION BY MASS SPECTROMETRY [LARGE SCALE ANALYSIS]</scope>
    <source>
        <tissue>Brown adipose tissue</tissue>
    </source>
</reference>